<protein>
    <recommendedName>
        <fullName evidence="6">Alpha-2,8-sialyltransferase 8E</fullName>
        <ecNumber evidence="5">2.4.99.-</ecNumber>
    </recommendedName>
    <alternativeName>
        <fullName>Sialyltransferase 8E</fullName>
        <shortName>SIAT8-E</shortName>
    </alternativeName>
    <alternativeName>
        <fullName>Sialyltransferase St8Sia V</fullName>
        <shortName>ST8SiaV</shortName>
    </alternativeName>
</protein>
<keyword id="KW-0025">Alternative splicing</keyword>
<keyword id="KW-1015">Disulfide bond</keyword>
<keyword id="KW-0325">Glycoprotein</keyword>
<keyword id="KW-0328">Glycosyltransferase</keyword>
<keyword id="KW-0333">Golgi apparatus</keyword>
<keyword id="KW-0443">Lipid metabolism</keyword>
<keyword id="KW-0472">Membrane</keyword>
<keyword id="KW-1185">Reference proteome</keyword>
<keyword id="KW-0735">Signal-anchor</keyword>
<keyword id="KW-0808">Transferase</keyword>
<keyword id="KW-0812">Transmembrane</keyword>
<keyword id="KW-1133">Transmembrane helix</keyword>
<organism>
    <name type="scientific">Mus musculus</name>
    <name type="common">Mouse</name>
    <dbReference type="NCBI Taxonomy" id="10090"/>
    <lineage>
        <taxon>Eukaryota</taxon>
        <taxon>Metazoa</taxon>
        <taxon>Chordata</taxon>
        <taxon>Craniata</taxon>
        <taxon>Vertebrata</taxon>
        <taxon>Euteleostomi</taxon>
        <taxon>Mammalia</taxon>
        <taxon>Eutheria</taxon>
        <taxon>Euarchontoglires</taxon>
        <taxon>Glires</taxon>
        <taxon>Rodentia</taxon>
        <taxon>Myomorpha</taxon>
        <taxon>Muroidea</taxon>
        <taxon>Muridae</taxon>
        <taxon>Murinae</taxon>
        <taxon>Mus</taxon>
        <taxon>Mus</taxon>
    </lineage>
</organism>
<evidence type="ECO:0000250" key="1">
    <source>
        <dbReference type="UniProtKB" id="O15466"/>
    </source>
</evidence>
<evidence type="ECO:0000250" key="2">
    <source>
        <dbReference type="UniProtKB" id="O43173"/>
    </source>
</evidence>
<evidence type="ECO:0000250" key="3">
    <source>
        <dbReference type="UniProtKB" id="Q6ZXC8"/>
    </source>
</evidence>
<evidence type="ECO:0000255" key="4"/>
<evidence type="ECO:0000269" key="5">
    <source>
    </source>
</evidence>
<evidence type="ECO:0000305" key="6"/>
<evidence type="ECO:0000312" key="7">
    <source>
        <dbReference type="EMBL" id="CAA66642.1"/>
    </source>
</evidence>
<name>SIA8E_MOUSE</name>
<dbReference type="EC" id="2.4.99.-" evidence="5"/>
<dbReference type="EMBL" id="X98014">
    <property type="protein sequence ID" value="CAA66642.1"/>
    <property type="molecule type" value="mRNA"/>
</dbReference>
<dbReference type="EMBL" id="X98014">
    <property type="protein sequence ID" value="CAA66643.1"/>
    <property type="molecule type" value="mRNA"/>
</dbReference>
<dbReference type="EMBL" id="X98014">
    <property type="protein sequence ID" value="CAA66644.1"/>
    <property type="molecule type" value="mRNA"/>
</dbReference>
<dbReference type="EMBL" id="AC157991">
    <property type="status" value="NOT_ANNOTATED_CDS"/>
    <property type="molecule type" value="Genomic_DNA"/>
</dbReference>
<dbReference type="CCDS" id="CCDS29353.1">
    <molecule id="P70126-2"/>
</dbReference>
<dbReference type="CCDS" id="CCDS50325.1">
    <molecule id="P70126-1"/>
</dbReference>
<dbReference type="RefSeq" id="NP_038694.2">
    <molecule id="P70126-1"/>
    <property type="nucleotide sequence ID" value="NM_013666.2"/>
</dbReference>
<dbReference type="RefSeq" id="NP_694764.2">
    <molecule id="P70126-2"/>
    <property type="nucleotide sequence ID" value="NM_153124.3"/>
</dbReference>
<dbReference type="SMR" id="P70126"/>
<dbReference type="FunCoup" id="P70126">
    <property type="interactions" value="219"/>
</dbReference>
<dbReference type="STRING" id="10090.ENSMUSP00000074764"/>
<dbReference type="SwissLipids" id="SLP:000000750">
    <molecule id="P70126-2"/>
</dbReference>
<dbReference type="CAZy" id="GT29">
    <property type="family name" value="Glycosyltransferase Family 29"/>
</dbReference>
<dbReference type="GlyCosmos" id="P70126">
    <property type="glycosylation" value="5 sites, No reported glycans"/>
</dbReference>
<dbReference type="GlyGen" id="P70126">
    <property type="glycosylation" value="5 sites, 1 N-linked glycan (1 site)"/>
</dbReference>
<dbReference type="iPTMnet" id="P70126"/>
<dbReference type="PhosphoSitePlus" id="P70126"/>
<dbReference type="PaxDb" id="10090-ENSMUSP00000074764"/>
<dbReference type="ProteomicsDB" id="257236">
    <molecule id="P70126-1"/>
</dbReference>
<dbReference type="ProteomicsDB" id="257237">
    <molecule id="P70126-2"/>
</dbReference>
<dbReference type="ProteomicsDB" id="257238">
    <molecule id="P70126-3"/>
</dbReference>
<dbReference type="Antibodypedia" id="54885">
    <property type="antibodies" value="38 antibodies from 10 providers"/>
</dbReference>
<dbReference type="DNASU" id="225742"/>
<dbReference type="Ensembl" id="ENSMUST00000075290.8">
    <molecule id="P70126-1"/>
    <property type="protein sequence ID" value="ENSMUSP00000074764.7"/>
    <property type="gene ID" value="ENSMUSG00000025425.19"/>
</dbReference>
<dbReference type="Ensembl" id="ENSMUST00000079618.11">
    <molecule id="P70126-2"/>
    <property type="protein sequence ID" value="ENSMUSP00000078566.5"/>
    <property type="gene ID" value="ENSMUSG00000025425.19"/>
</dbReference>
<dbReference type="GeneID" id="225742"/>
<dbReference type="KEGG" id="mmu:225742"/>
<dbReference type="UCSC" id="uc008frh.2">
    <molecule id="P70126-1"/>
    <property type="organism name" value="mouse"/>
</dbReference>
<dbReference type="AGR" id="MGI:109243"/>
<dbReference type="CTD" id="29906"/>
<dbReference type="MGI" id="MGI:109243">
    <property type="gene designation" value="St8sia5"/>
</dbReference>
<dbReference type="VEuPathDB" id="HostDB:ENSMUSG00000025425"/>
<dbReference type="eggNOG" id="KOG2692">
    <property type="taxonomic scope" value="Eukaryota"/>
</dbReference>
<dbReference type="GeneTree" id="ENSGT01030000234535"/>
<dbReference type="HOGENOM" id="CLU_048583_1_1_1"/>
<dbReference type="InParanoid" id="P70126"/>
<dbReference type="OMA" id="MFICAFG"/>
<dbReference type="OrthoDB" id="10264956at2759"/>
<dbReference type="PhylomeDB" id="P70126"/>
<dbReference type="TreeFam" id="TF323961"/>
<dbReference type="Reactome" id="R-MMU-4085001">
    <property type="pathway name" value="Sialic acid metabolism"/>
</dbReference>
<dbReference type="Reactome" id="R-MMU-9840309">
    <property type="pathway name" value="Glycosphingolipid biosynthesis"/>
</dbReference>
<dbReference type="UniPathway" id="UPA00378"/>
<dbReference type="BioGRID-ORCS" id="225742">
    <property type="hits" value="6 hits in 79 CRISPR screens"/>
</dbReference>
<dbReference type="PRO" id="PR:P70126"/>
<dbReference type="Proteomes" id="UP000000589">
    <property type="component" value="Chromosome 18"/>
</dbReference>
<dbReference type="RNAct" id="P70126">
    <property type="molecule type" value="protein"/>
</dbReference>
<dbReference type="Bgee" id="ENSMUSG00000025425">
    <property type="expression patterns" value="Expressed in cerebellar cortex and 80 other cell types or tissues"/>
</dbReference>
<dbReference type="ExpressionAtlas" id="P70126">
    <property type="expression patterns" value="baseline and differential"/>
</dbReference>
<dbReference type="GO" id="GO:0000139">
    <property type="term" value="C:Golgi membrane"/>
    <property type="evidence" value="ECO:0000250"/>
    <property type="project" value="UniProtKB"/>
</dbReference>
<dbReference type="GO" id="GO:0003828">
    <property type="term" value="F:alpha-N-acetylneuraminate alpha-2,8-sialyltransferase activity"/>
    <property type="evidence" value="ECO:0000314"/>
    <property type="project" value="MGI"/>
</dbReference>
<dbReference type="GO" id="GO:0006688">
    <property type="term" value="P:glycosphingolipid biosynthetic process"/>
    <property type="evidence" value="ECO:0000250"/>
    <property type="project" value="UniProtKB"/>
</dbReference>
<dbReference type="GO" id="GO:0006486">
    <property type="term" value="P:protein glycosylation"/>
    <property type="evidence" value="ECO:0007669"/>
    <property type="project" value="UniProtKB-UniPathway"/>
</dbReference>
<dbReference type="FunFam" id="3.90.1480.20:FF:000004">
    <property type="entry name" value="alpha-2,8-sialyltransferase 8E isoform X1"/>
    <property type="match status" value="1"/>
</dbReference>
<dbReference type="Gene3D" id="3.90.1480.20">
    <property type="entry name" value="Glycosyl transferase family 29"/>
    <property type="match status" value="1"/>
</dbReference>
<dbReference type="InterPro" id="IPR001675">
    <property type="entry name" value="Glyco_trans_29"/>
</dbReference>
<dbReference type="InterPro" id="IPR050943">
    <property type="entry name" value="Glycosyltr_29_Sialyltrsf"/>
</dbReference>
<dbReference type="InterPro" id="IPR038578">
    <property type="entry name" value="GT29-like_sf"/>
</dbReference>
<dbReference type="InterPro" id="IPR012163">
    <property type="entry name" value="Sialyl_trans"/>
</dbReference>
<dbReference type="PANTHER" id="PTHR11987">
    <property type="entry name" value="ALPHA-2,8-SIALYLTRANSFERASE"/>
    <property type="match status" value="1"/>
</dbReference>
<dbReference type="PANTHER" id="PTHR11987:SF4">
    <property type="entry name" value="ALPHA-2,8-SIALYLTRANSFERASE 8E"/>
    <property type="match status" value="1"/>
</dbReference>
<dbReference type="Pfam" id="PF00777">
    <property type="entry name" value="Glyco_transf_29"/>
    <property type="match status" value="1"/>
</dbReference>
<dbReference type="PIRSF" id="PIRSF005557">
    <property type="entry name" value="Sialyl_trans"/>
    <property type="match status" value="1"/>
</dbReference>
<feature type="chain" id="PRO_0000149297" description="Alpha-2,8-sialyltransferase 8E">
    <location>
        <begin position="1"/>
        <end position="412"/>
    </location>
</feature>
<feature type="topological domain" description="Cytoplasmic" evidence="4">
    <location>
        <begin position="1"/>
        <end position="16"/>
    </location>
</feature>
<feature type="transmembrane region" description="Helical; Signal-anchor for type II membrane protein" evidence="4">
    <location>
        <begin position="17"/>
        <end position="37"/>
    </location>
</feature>
<feature type="topological domain" description="Lumenal" evidence="4">
    <location>
        <begin position="38"/>
        <end position="412"/>
    </location>
</feature>
<feature type="active site" description="Proton donor/acceptor" evidence="2">
    <location>
        <position position="384"/>
    </location>
</feature>
<feature type="binding site" evidence="2">
    <location>
        <position position="228"/>
    </location>
    <ligand>
        <name>substrate</name>
    </ligand>
</feature>
<feature type="binding site" evidence="2">
    <location>
        <begin position="250"/>
        <end position="252"/>
    </location>
    <ligand>
        <name>substrate</name>
    </ligand>
</feature>
<feature type="binding site" evidence="2">
    <location>
        <begin position="336"/>
        <end position="338"/>
    </location>
    <ligand>
        <name>substrate</name>
    </ligand>
</feature>
<feature type="glycosylation site" description="N-linked (GlcNAc...) asparagine" evidence="4">
    <location>
        <position position="58"/>
    </location>
</feature>
<feature type="glycosylation site" description="N-linked (GlcNAc...) asparagine" evidence="4">
    <location>
        <position position="64"/>
    </location>
</feature>
<feature type="glycosylation site" description="N-linked (GlcNAc...) asparagine" evidence="4">
    <location>
        <position position="73"/>
    </location>
</feature>
<feature type="glycosylation site" description="N-linked (GlcNAc...) asparagine" evidence="4">
    <location>
        <position position="92"/>
    </location>
</feature>
<feature type="glycosylation site" description="N-linked (GlcNAc...) asparagine" evidence="4">
    <location>
        <position position="277"/>
    </location>
</feature>
<feature type="disulfide bond" evidence="2">
    <location>
        <begin position="200"/>
        <end position="349"/>
    </location>
</feature>
<feature type="disulfide bond" evidence="2">
    <location>
        <begin position="214"/>
        <end position="409"/>
    </location>
</feature>
<feature type="splice variant" id="VSP_001790" description="In isoform V-S." evidence="6">
    <location>
        <begin position="44"/>
        <end position="110"/>
    </location>
</feature>
<feature type="splice variant" id="VSP_001789" description="In isoform V-M." evidence="6">
    <location>
        <begin position="44"/>
        <end position="79"/>
    </location>
</feature>
<feature type="sequence conflict" description="In Ref. 1; CAA66642/CAA66643/CAA66644." evidence="6" ref="1">
    <original>DTA</original>
    <variation>GAS</variation>
    <location>
        <begin position="132"/>
        <end position="134"/>
    </location>
</feature>
<feature type="sequence conflict" description="In Ref. 1; CAA66642/CAA66643/CAA66644." evidence="6" ref="1">
    <original>S</original>
    <variation>N</variation>
    <location>
        <position position="151"/>
    </location>
</feature>
<feature type="sequence conflict" description="In Ref. 1; CAA66642/CAA66643/CAA66644." evidence="6" ref="1">
    <original>I</original>
    <variation>S</variation>
    <location>
        <position position="340"/>
    </location>
</feature>
<comment type="function">
    <text evidence="5">Involved in the synthesis of gangliosides GD1c, GT1a, GQ1b, GP1c and GT3 from GD1a, GT1b, GM1b and GD3 respectively.</text>
</comment>
<comment type="catalytic activity">
    <reaction evidence="5">
        <text>a ganglioside GT1b (d18:1(4E)) + CMP-N-acetyl-beta-neuraminate = a ganglioside GQ1b (d18:1(4E)) + CMP + H(+)</text>
        <dbReference type="Rhea" id="RHEA:41772"/>
        <dbReference type="ChEBI" id="CHEBI:15378"/>
        <dbReference type="ChEBI" id="CHEBI:57812"/>
        <dbReference type="ChEBI" id="CHEBI:60377"/>
        <dbReference type="ChEBI" id="CHEBI:78452"/>
        <dbReference type="ChEBI" id="CHEBI:78455"/>
    </reaction>
    <physiologicalReaction direction="left-to-right" evidence="5">
        <dbReference type="Rhea" id="RHEA:41773"/>
    </physiologicalReaction>
</comment>
<comment type="catalytic activity">
    <reaction evidence="5">
        <text>a ganglioside GD3 (d18:1(4E)) + CMP-N-acetyl-beta-neuraminate = a ganglioside GT3 (d18:1(4E)) + CMP + H(+)</text>
        <dbReference type="Rhea" id="RHEA:41764"/>
        <dbReference type="ChEBI" id="CHEBI:15378"/>
        <dbReference type="ChEBI" id="CHEBI:57812"/>
        <dbReference type="ChEBI" id="CHEBI:60377"/>
        <dbReference type="ChEBI" id="CHEBI:78436"/>
        <dbReference type="ChEBI" id="CHEBI:78438"/>
    </reaction>
    <physiologicalReaction direction="left-to-right" evidence="5">
        <dbReference type="Rhea" id="RHEA:41765"/>
    </physiologicalReaction>
</comment>
<comment type="catalytic activity">
    <reaction evidence="5">
        <text>a ganglioside GD1a (d18:1(4E)) + CMP-N-acetyl-beta-neuraminate = a ganglioside GT1a (d18:1(4E)) + CMP + H(+)</text>
        <dbReference type="Rhea" id="RHEA:41768"/>
        <dbReference type="ChEBI" id="CHEBI:15378"/>
        <dbReference type="ChEBI" id="CHEBI:57812"/>
        <dbReference type="ChEBI" id="CHEBI:60377"/>
        <dbReference type="ChEBI" id="CHEBI:78445"/>
        <dbReference type="ChEBI" id="CHEBI:78447"/>
    </reaction>
    <physiologicalReaction direction="left-to-right" evidence="5">
        <dbReference type="Rhea" id="RHEA:41769"/>
    </physiologicalReaction>
</comment>
<comment type="catalytic activity">
    <reaction evidence="1">
        <text>a ganglioside GM1b (d18:1(4E)) + CMP-N-acetyl-beta-neuraminate = a ganglioside GD1c (d18:1(4E)) + CMP + H(+)</text>
        <dbReference type="Rhea" id="RHEA:47576"/>
        <dbReference type="ChEBI" id="CHEBI:15378"/>
        <dbReference type="ChEBI" id="CHEBI:57812"/>
        <dbReference type="ChEBI" id="CHEBI:60377"/>
        <dbReference type="ChEBI" id="CHEBI:78568"/>
        <dbReference type="ChEBI" id="CHEBI:87787"/>
    </reaction>
    <physiologicalReaction direction="left-to-right" evidence="1">
        <dbReference type="Rhea" id="RHEA:47577"/>
    </physiologicalReaction>
</comment>
<comment type="catalytic activity">
    <reaction evidence="3">
        <text>a ganglioside GQ1c (d18:1(4E)) + CMP-N-acetyl-beta-neuraminate = a ganglioside GP1c (d18:1(4E)) + CMP + H(+)</text>
        <dbReference type="Rhea" id="RHEA:47592"/>
        <dbReference type="ChEBI" id="CHEBI:15378"/>
        <dbReference type="ChEBI" id="CHEBI:57812"/>
        <dbReference type="ChEBI" id="CHEBI:60377"/>
        <dbReference type="ChEBI" id="CHEBI:87791"/>
        <dbReference type="ChEBI" id="CHEBI:87792"/>
    </reaction>
    <physiologicalReaction direction="left-to-right" evidence="3">
        <dbReference type="Rhea" id="RHEA:47593"/>
    </physiologicalReaction>
</comment>
<comment type="biophysicochemical properties">
    <molecule>Isoform V-L</molecule>
    <kinetics>
        <KM evidence="5">1 mM for GM1b</KM>
        <KM evidence="5">0.068 mM for GT1b</KM>
    </kinetics>
</comment>
<comment type="biophysicochemical properties">
    <molecule>Isoform V-M</molecule>
    <kinetics>
        <KM evidence="5">1.1 mM for GM1b</KM>
        <KM evidence="5">0.07 mM for GT1b</KM>
    </kinetics>
</comment>
<comment type="biophysicochemical properties">
    <molecule>Isoform V-S</molecule>
    <kinetics>
        <KM evidence="5">1 mM for GM1b</KM>
        <KM evidence="5">0.072 mM for GT1b</KM>
    </kinetics>
</comment>
<comment type="pathway">
    <text evidence="5">Protein modification; protein glycosylation.</text>
</comment>
<comment type="subcellular location">
    <subcellularLocation>
        <location evidence="3">Golgi apparatus membrane</location>
        <topology evidence="4">Single-pass type II membrane protein</topology>
    </subcellularLocation>
</comment>
<comment type="alternative products">
    <event type="alternative splicing"/>
    <isoform>
        <id>P70126-1</id>
        <name>V-L</name>
        <name>Long</name>
        <sequence type="displayed"/>
    </isoform>
    <isoform>
        <id>P70126-2</id>
        <name>V-M</name>
        <name>Middle</name>
        <sequence type="described" ref="VSP_001789"/>
    </isoform>
    <isoform>
        <id>P70126-3</id>
        <name>V-S</name>
        <name>Short</name>
        <sequence type="described" ref="VSP_001790"/>
    </isoform>
</comment>
<comment type="tissue specificity">
    <text evidence="5">Highly expressed in brain. Expressed at low levels in other tissues, including liver, testis, lung, placenta and spleen.</text>
</comment>
<comment type="developmental stage">
    <text evidence="5">First detected at 14 dpc, expression increases until at least 7 weeks after birth.</text>
</comment>
<comment type="similarity">
    <text evidence="6">Belongs to the glycosyltransferase 29 family.</text>
</comment>
<comment type="online information" name="Functional Glycomics Gateway - GTase">
    <link uri="http://www.functionalglycomics.org/glycomics/molecule/jsp/glycoEnzyme/viewGlycoEnzyme.jsp?gbpId=gt_mou_660"/>
    <text>ST8Sia V</text>
</comment>
<sequence length="412" mass="47829">MRYADPSANRDLLGNRTLLFIFICAFALVTLLQQILYSKSYIKRGFQFGWQRGDQQANWTGLFNDSDSPTEQNITGSSSRYFEFYKEPLEFNSTRCLELRQEILEVKVLSMVKQSELFERWKSLQICKWAMDTAEASLFKSTLSRCCNAPSFLFTTQKNTPVETNLRYEVESSGLYHIDQEIFKMFPKEMPYYRSQFKKCAVVGNGGILKNSGCGKEINSADFVFRCNLPPISGIYTTDVGEKTDVVTVNPSIIIDRFHKLEKWRRPFFSVLQRYENASVLLPAFYNVRNTLVSFRVKYMLDDFQSRQPVYFFHPQYLSSVSRYWLSLGVRARRISTGLILVTAALELCEEVHLFGFWAFPMNPSGFFITHHYYDNVKPKPGFHAMPSEIFTFLRMHSRGILRVHTGTCNCC</sequence>
<accession>P70126</accession>
<accession>E9QKY5</accession>
<accession>P70127</accession>
<accession>P70128</accession>
<gene>
    <name evidence="7" type="primary">St8sia5</name>
    <name type="synonym">Siat8e</name>
    <name type="synonym">St8siav</name>
</gene>
<reference key="1">
    <citation type="journal article" date="1996" name="J. Biol. Chem.">
        <title>Molecular cloning and expression of a fifth type of alpha2,8-sialyltransferase (ST8Sia V). Its substrate specificity is similar to that of SAT-V/III, which synthesize GD1c, GT1a, GQ1b and GT3.</title>
        <authorList>
            <person name="Kono M."/>
            <person name="Yoshida Y."/>
            <person name="Kojima N."/>
            <person name="Tsuji S."/>
        </authorList>
    </citation>
    <scope>NUCLEOTIDE SEQUENCE [MRNA]</scope>
    <scope>CHARACTERIZATION</scope>
    <scope>ALTERNATIVE SPLICING</scope>
    <scope>FUNCTION</scope>
    <scope>CATALYTIC ACTIVITY</scope>
    <scope>DEVELOPMENTAL STAGE</scope>
    <scope>BIOPHYSICOCHEMICAL PROPERTIES</scope>
    <source>
        <tissue>Brain</tissue>
    </source>
</reference>
<reference key="2">
    <citation type="journal article" date="2009" name="PLoS Biol.">
        <title>Lineage-specific biology revealed by a finished genome assembly of the mouse.</title>
        <authorList>
            <person name="Church D.M."/>
            <person name="Goodstadt L."/>
            <person name="Hillier L.W."/>
            <person name="Zody M.C."/>
            <person name="Goldstein S."/>
            <person name="She X."/>
            <person name="Bult C.J."/>
            <person name="Agarwala R."/>
            <person name="Cherry J.L."/>
            <person name="DiCuccio M."/>
            <person name="Hlavina W."/>
            <person name="Kapustin Y."/>
            <person name="Meric P."/>
            <person name="Maglott D."/>
            <person name="Birtle Z."/>
            <person name="Marques A.C."/>
            <person name="Graves T."/>
            <person name="Zhou S."/>
            <person name="Teague B."/>
            <person name="Potamousis K."/>
            <person name="Churas C."/>
            <person name="Place M."/>
            <person name="Herschleb J."/>
            <person name="Runnheim R."/>
            <person name="Forrest D."/>
            <person name="Amos-Landgraf J."/>
            <person name="Schwartz D.C."/>
            <person name="Cheng Z."/>
            <person name="Lindblad-Toh K."/>
            <person name="Eichler E.E."/>
            <person name="Ponting C.P."/>
        </authorList>
    </citation>
    <scope>NUCLEOTIDE SEQUENCE [LARGE SCALE GENOMIC DNA]</scope>
    <source>
        <strain>C57BL/6J</strain>
    </source>
</reference>
<proteinExistence type="evidence at protein level"/>